<accession>B5E609</accession>
<comment type="function">
    <text evidence="1">A non-essential component of RNA polymerase (RNAP).</text>
</comment>
<comment type="catalytic activity">
    <reaction evidence="1">
        <text>RNA(n) + a ribonucleoside 5'-triphosphate = RNA(n+1) + diphosphate</text>
        <dbReference type="Rhea" id="RHEA:21248"/>
        <dbReference type="Rhea" id="RHEA-COMP:14527"/>
        <dbReference type="Rhea" id="RHEA-COMP:17342"/>
        <dbReference type="ChEBI" id="CHEBI:33019"/>
        <dbReference type="ChEBI" id="CHEBI:61557"/>
        <dbReference type="ChEBI" id="CHEBI:140395"/>
        <dbReference type="EC" id="2.7.7.6"/>
    </reaction>
</comment>
<comment type="subunit">
    <text evidence="1">RNAP is composed of a core of 2 alpha, a beta and a beta' subunit. The core is associated with a delta subunit, and at least one of epsilon or omega. When a sigma factor is associated with the core the holoenzyme is formed, which can initiate transcription.</text>
</comment>
<comment type="similarity">
    <text evidence="1">Belongs to the RNA polymerase subunit epsilon family.</text>
</comment>
<name>RPOY_STRP4</name>
<dbReference type="EC" id="2.7.7.6" evidence="1"/>
<dbReference type="EMBL" id="CP001015">
    <property type="protein sequence ID" value="ACF56752.1"/>
    <property type="molecule type" value="Genomic_DNA"/>
</dbReference>
<dbReference type="SMR" id="B5E609"/>
<dbReference type="KEGG" id="spx:SPG_0127"/>
<dbReference type="HOGENOM" id="CLU_187518_0_0_9"/>
<dbReference type="GO" id="GO:0000428">
    <property type="term" value="C:DNA-directed RNA polymerase complex"/>
    <property type="evidence" value="ECO:0007669"/>
    <property type="project" value="UniProtKB-KW"/>
</dbReference>
<dbReference type="GO" id="GO:0003677">
    <property type="term" value="F:DNA binding"/>
    <property type="evidence" value="ECO:0007669"/>
    <property type="project" value="UniProtKB-UniRule"/>
</dbReference>
<dbReference type="GO" id="GO:0003899">
    <property type="term" value="F:DNA-directed RNA polymerase activity"/>
    <property type="evidence" value="ECO:0007669"/>
    <property type="project" value="UniProtKB-UniRule"/>
</dbReference>
<dbReference type="GO" id="GO:0006351">
    <property type="term" value="P:DNA-templated transcription"/>
    <property type="evidence" value="ECO:0007669"/>
    <property type="project" value="UniProtKB-UniRule"/>
</dbReference>
<dbReference type="Gene3D" id="3.10.20.730">
    <property type="entry name" value="RNAP, epsilon subunit-like"/>
    <property type="match status" value="1"/>
</dbReference>
<dbReference type="HAMAP" id="MF_01553">
    <property type="entry name" value="RNApol_bact_RpoY"/>
    <property type="match status" value="1"/>
</dbReference>
<dbReference type="InterPro" id="IPR009907">
    <property type="entry name" value="RpoY"/>
</dbReference>
<dbReference type="NCBIfam" id="NF010188">
    <property type="entry name" value="PRK13667.1"/>
    <property type="match status" value="1"/>
</dbReference>
<dbReference type="Pfam" id="PF07288">
    <property type="entry name" value="RpoY"/>
    <property type="match status" value="1"/>
</dbReference>
<organism>
    <name type="scientific">Streptococcus pneumoniae serotype 19F (strain G54)</name>
    <dbReference type="NCBI Taxonomy" id="512566"/>
    <lineage>
        <taxon>Bacteria</taxon>
        <taxon>Bacillati</taxon>
        <taxon>Bacillota</taxon>
        <taxon>Bacilli</taxon>
        <taxon>Lactobacillales</taxon>
        <taxon>Streptococcaceae</taxon>
        <taxon>Streptococcus</taxon>
    </lineage>
</organism>
<reference key="1">
    <citation type="journal article" date="2001" name="Microb. Drug Resist.">
        <title>Annotated draft genomic sequence from a Streptococcus pneumoniae type 19F clinical isolate.</title>
        <authorList>
            <person name="Dopazo J."/>
            <person name="Mendoza A."/>
            <person name="Herrero J."/>
            <person name="Caldara F."/>
            <person name="Humbert Y."/>
            <person name="Friedli L."/>
            <person name="Guerrier M."/>
            <person name="Grand-Schenk E."/>
            <person name="Gandin C."/>
            <person name="de Francesco M."/>
            <person name="Polissi A."/>
            <person name="Buell G."/>
            <person name="Feger G."/>
            <person name="Garcia E."/>
            <person name="Peitsch M."/>
            <person name="Garcia-Bustos J.F."/>
        </authorList>
    </citation>
    <scope>NUCLEOTIDE SEQUENCE [LARGE SCALE GENOMIC DNA]</scope>
    <source>
        <strain>G54</strain>
    </source>
</reference>
<reference key="2">
    <citation type="submission" date="2008-03" db="EMBL/GenBank/DDBJ databases">
        <title>Pneumococcal beta glucoside metabolism investigated by whole genome comparison.</title>
        <authorList>
            <person name="Mulas L."/>
            <person name="Trappetti C."/>
            <person name="Hakenbeck R."/>
            <person name="Iannelli F."/>
            <person name="Pozzi G."/>
            <person name="Davidsen T.M."/>
            <person name="Tettelin H."/>
            <person name="Oggioni M."/>
        </authorList>
    </citation>
    <scope>NUCLEOTIDE SEQUENCE [LARGE SCALE GENOMIC DNA]</scope>
    <source>
        <strain>G54</strain>
    </source>
</reference>
<sequence length="77" mass="9258">MIYKVFYQETKERSPRRETTRALYLDIDASSELEGRITARQLVEENRPEYNIEYIELLSDKLLDYEKETGAFEITEF</sequence>
<feature type="chain" id="PRO_1000199624" description="DNA-directed RNA polymerase subunit epsilon">
    <location>
        <begin position="1"/>
        <end position="77"/>
    </location>
</feature>
<evidence type="ECO:0000255" key="1">
    <source>
        <dbReference type="HAMAP-Rule" id="MF_01553"/>
    </source>
</evidence>
<protein>
    <recommendedName>
        <fullName evidence="1">DNA-directed RNA polymerase subunit epsilon</fullName>
        <shortName evidence="1">RNAP epsilon subunit</shortName>
        <ecNumber evidence="1">2.7.7.6</ecNumber>
    </recommendedName>
    <alternativeName>
        <fullName evidence="1">RNA polymerase epsilon subunit</fullName>
    </alternativeName>
    <alternativeName>
        <fullName evidence="1">Transcriptase subunit epsilon</fullName>
    </alternativeName>
</protein>
<proteinExistence type="inferred from homology"/>
<gene>
    <name evidence="1" type="primary">rpoY</name>
    <name type="ordered locus">SPG_0127</name>
</gene>
<keyword id="KW-0240">DNA-directed RNA polymerase</keyword>
<keyword id="KW-0548">Nucleotidyltransferase</keyword>
<keyword id="KW-0804">Transcription</keyword>
<keyword id="KW-0808">Transferase</keyword>